<reference key="1">
    <citation type="journal article" date="2003" name="Nat. Genet.">
        <title>Comparative analysis of the genome sequences of Bordetella pertussis, Bordetella parapertussis and Bordetella bronchiseptica.</title>
        <authorList>
            <person name="Parkhill J."/>
            <person name="Sebaihia M."/>
            <person name="Preston A."/>
            <person name="Murphy L.D."/>
            <person name="Thomson N.R."/>
            <person name="Harris D.E."/>
            <person name="Holden M.T.G."/>
            <person name="Churcher C.M."/>
            <person name="Bentley S.D."/>
            <person name="Mungall K.L."/>
            <person name="Cerdeno-Tarraga A.-M."/>
            <person name="Temple L."/>
            <person name="James K.D."/>
            <person name="Harris B."/>
            <person name="Quail M.A."/>
            <person name="Achtman M."/>
            <person name="Atkin R."/>
            <person name="Baker S."/>
            <person name="Basham D."/>
            <person name="Bason N."/>
            <person name="Cherevach I."/>
            <person name="Chillingworth T."/>
            <person name="Collins M."/>
            <person name="Cronin A."/>
            <person name="Davis P."/>
            <person name="Doggett J."/>
            <person name="Feltwell T."/>
            <person name="Goble A."/>
            <person name="Hamlin N."/>
            <person name="Hauser H."/>
            <person name="Holroyd S."/>
            <person name="Jagels K."/>
            <person name="Leather S."/>
            <person name="Moule S."/>
            <person name="Norberczak H."/>
            <person name="O'Neil S."/>
            <person name="Ormond D."/>
            <person name="Price C."/>
            <person name="Rabbinowitsch E."/>
            <person name="Rutter S."/>
            <person name="Sanders M."/>
            <person name="Saunders D."/>
            <person name="Seeger K."/>
            <person name="Sharp S."/>
            <person name="Simmonds M."/>
            <person name="Skelton J."/>
            <person name="Squares R."/>
            <person name="Squares S."/>
            <person name="Stevens K."/>
            <person name="Unwin L."/>
            <person name="Whitehead S."/>
            <person name="Barrell B.G."/>
            <person name="Maskell D.J."/>
        </authorList>
    </citation>
    <scope>NUCLEOTIDE SEQUENCE [LARGE SCALE GENOMIC DNA]</scope>
    <source>
        <strain>Tohama I / ATCC BAA-589 / NCTC 13251</strain>
    </source>
</reference>
<evidence type="ECO:0000255" key="1">
    <source>
        <dbReference type="HAMAP-Rule" id="MF_00169"/>
    </source>
</evidence>
<gene>
    <name evidence="1" type="primary">aroQ</name>
    <name type="ordered locus">BP2998</name>
</gene>
<dbReference type="EC" id="4.2.1.10" evidence="1"/>
<dbReference type="EMBL" id="BX640420">
    <property type="protein sequence ID" value="CAE43269.1"/>
    <property type="molecule type" value="Genomic_DNA"/>
</dbReference>
<dbReference type="RefSeq" id="NP_881573.1">
    <property type="nucleotide sequence ID" value="NC_002929.2"/>
</dbReference>
<dbReference type="RefSeq" id="WP_003814953.1">
    <property type="nucleotide sequence ID" value="NZ_CP039022.1"/>
</dbReference>
<dbReference type="SMR" id="Q7VUS7"/>
<dbReference type="STRING" id="257313.BP2998"/>
<dbReference type="PaxDb" id="257313-BP2998"/>
<dbReference type="GeneID" id="93205717"/>
<dbReference type="KEGG" id="bpe:BP2998"/>
<dbReference type="PATRIC" id="fig|257313.5.peg.3243"/>
<dbReference type="eggNOG" id="COG0757">
    <property type="taxonomic scope" value="Bacteria"/>
</dbReference>
<dbReference type="HOGENOM" id="CLU_090968_1_0_4"/>
<dbReference type="UniPathway" id="UPA00053">
    <property type="reaction ID" value="UER00086"/>
</dbReference>
<dbReference type="Proteomes" id="UP000002676">
    <property type="component" value="Chromosome"/>
</dbReference>
<dbReference type="GO" id="GO:0003855">
    <property type="term" value="F:3-dehydroquinate dehydratase activity"/>
    <property type="evidence" value="ECO:0007669"/>
    <property type="project" value="UniProtKB-UniRule"/>
</dbReference>
<dbReference type="GO" id="GO:0008652">
    <property type="term" value="P:amino acid biosynthetic process"/>
    <property type="evidence" value="ECO:0007669"/>
    <property type="project" value="UniProtKB-KW"/>
</dbReference>
<dbReference type="GO" id="GO:0009073">
    <property type="term" value="P:aromatic amino acid family biosynthetic process"/>
    <property type="evidence" value="ECO:0007669"/>
    <property type="project" value="UniProtKB-KW"/>
</dbReference>
<dbReference type="GO" id="GO:0009423">
    <property type="term" value="P:chorismate biosynthetic process"/>
    <property type="evidence" value="ECO:0007669"/>
    <property type="project" value="UniProtKB-UniRule"/>
</dbReference>
<dbReference type="GO" id="GO:0019631">
    <property type="term" value="P:quinate catabolic process"/>
    <property type="evidence" value="ECO:0007669"/>
    <property type="project" value="TreeGrafter"/>
</dbReference>
<dbReference type="CDD" id="cd00466">
    <property type="entry name" value="DHQase_II"/>
    <property type="match status" value="1"/>
</dbReference>
<dbReference type="Gene3D" id="3.40.50.9100">
    <property type="entry name" value="Dehydroquinase, class II"/>
    <property type="match status" value="1"/>
</dbReference>
<dbReference type="HAMAP" id="MF_00169">
    <property type="entry name" value="AroQ"/>
    <property type="match status" value="1"/>
</dbReference>
<dbReference type="InterPro" id="IPR001874">
    <property type="entry name" value="DHquinase_II"/>
</dbReference>
<dbReference type="InterPro" id="IPR018509">
    <property type="entry name" value="DHquinase_II_CS"/>
</dbReference>
<dbReference type="InterPro" id="IPR036441">
    <property type="entry name" value="DHquinase_II_sf"/>
</dbReference>
<dbReference type="NCBIfam" id="TIGR01088">
    <property type="entry name" value="aroQ"/>
    <property type="match status" value="1"/>
</dbReference>
<dbReference type="NCBIfam" id="NF003804">
    <property type="entry name" value="PRK05395.1-1"/>
    <property type="match status" value="1"/>
</dbReference>
<dbReference type="NCBIfam" id="NF003805">
    <property type="entry name" value="PRK05395.1-2"/>
    <property type="match status" value="1"/>
</dbReference>
<dbReference type="NCBIfam" id="NF003806">
    <property type="entry name" value="PRK05395.1-3"/>
    <property type="match status" value="1"/>
</dbReference>
<dbReference type="NCBIfam" id="NF003807">
    <property type="entry name" value="PRK05395.1-4"/>
    <property type="match status" value="1"/>
</dbReference>
<dbReference type="PANTHER" id="PTHR21272">
    <property type="entry name" value="CATABOLIC 3-DEHYDROQUINASE"/>
    <property type="match status" value="1"/>
</dbReference>
<dbReference type="PANTHER" id="PTHR21272:SF3">
    <property type="entry name" value="CATABOLIC 3-DEHYDROQUINASE"/>
    <property type="match status" value="1"/>
</dbReference>
<dbReference type="Pfam" id="PF01220">
    <property type="entry name" value="DHquinase_II"/>
    <property type="match status" value="1"/>
</dbReference>
<dbReference type="PIRSF" id="PIRSF001399">
    <property type="entry name" value="DHquinase_II"/>
    <property type="match status" value="1"/>
</dbReference>
<dbReference type="SUPFAM" id="SSF52304">
    <property type="entry name" value="Type II 3-dehydroquinate dehydratase"/>
    <property type="match status" value="1"/>
</dbReference>
<dbReference type="PROSITE" id="PS01029">
    <property type="entry name" value="DEHYDROQUINASE_II"/>
    <property type="match status" value="1"/>
</dbReference>
<feature type="chain" id="PRO_0000159876" description="3-dehydroquinate dehydratase">
    <location>
        <begin position="1"/>
        <end position="144"/>
    </location>
</feature>
<feature type="active site" description="Proton acceptor" evidence="1">
    <location>
        <position position="24"/>
    </location>
</feature>
<feature type="active site" description="Proton donor" evidence="1">
    <location>
        <position position="102"/>
    </location>
</feature>
<feature type="binding site" evidence="1">
    <location>
        <position position="76"/>
    </location>
    <ligand>
        <name>substrate</name>
    </ligand>
</feature>
<feature type="binding site" evidence="1">
    <location>
        <position position="82"/>
    </location>
    <ligand>
        <name>substrate</name>
    </ligand>
</feature>
<feature type="binding site" evidence="1">
    <location>
        <position position="89"/>
    </location>
    <ligand>
        <name>substrate</name>
    </ligand>
</feature>
<feature type="binding site" evidence="1">
    <location>
        <begin position="103"/>
        <end position="104"/>
    </location>
    <ligand>
        <name>substrate</name>
    </ligand>
</feature>
<feature type="binding site" evidence="1">
    <location>
        <position position="113"/>
    </location>
    <ligand>
        <name>substrate</name>
    </ligand>
</feature>
<feature type="site" description="Transition state stabilizer" evidence="1">
    <location>
        <position position="19"/>
    </location>
</feature>
<keyword id="KW-0028">Amino-acid biosynthesis</keyword>
<keyword id="KW-0057">Aromatic amino acid biosynthesis</keyword>
<keyword id="KW-0456">Lyase</keyword>
<keyword id="KW-1185">Reference proteome</keyword>
<comment type="function">
    <text evidence="1">Catalyzes a trans-dehydration via an enolate intermediate.</text>
</comment>
<comment type="catalytic activity">
    <reaction evidence="1">
        <text>3-dehydroquinate = 3-dehydroshikimate + H2O</text>
        <dbReference type="Rhea" id="RHEA:21096"/>
        <dbReference type="ChEBI" id="CHEBI:15377"/>
        <dbReference type="ChEBI" id="CHEBI:16630"/>
        <dbReference type="ChEBI" id="CHEBI:32364"/>
        <dbReference type="EC" id="4.2.1.10"/>
    </reaction>
</comment>
<comment type="pathway">
    <text evidence="1">Metabolic intermediate biosynthesis; chorismate biosynthesis; chorismate from D-erythrose 4-phosphate and phosphoenolpyruvate: step 3/7.</text>
</comment>
<comment type="subunit">
    <text evidence="1">Homododecamer.</text>
</comment>
<comment type="similarity">
    <text evidence="1">Belongs to the type-II 3-dehydroquinase family.</text>
</comment>
<accession>Q7VUS7</accession>
<organism>
    <name type="scientific">Bordetella pertussis (strain Tohama I / ATCC BAA-589 / NCTC 13251)</name>
    <dbReference type="NCBI Taxonomy" id="257313"/>
    <lineage>
        <taxon>Bacteria</taxon>
        <taxon>Pseudomonadati</taxon>
        <taxon>Pseudomonadota</taxon>
        <taxon>Betaproteobacteria</taxon>
        <taxon>Burkholderiales</taxon>
        <taxon>Alcaligenaceae</taxon>
        <taxon>Bordetella</taxon>
    </lineage>
</organism>
<proteinExistence type="inferred from homology"/>
<name>AROQ_BORPE</name>
<protein>
    <recommendedName>
        <fullName evidence="1">3-dehydroquinate dehydratase</fullName>
        <shortName evidence="1">3-dehydroquinase</shortName>
        <ecNumber evidence="1">4.2.1.10</ecNumber>
    </recommendedName>
    <alternativeName>
        <fullName evidence="1">Type II DHQase</fullName>
    </alternativeName>
</protein>
<sequence length="144" mass="15386">MAQRILVLHGPNLNLLGTREPHIYGSLTLAQIDQGLAALAGQLGVALTSWQSNHEGALVERIQAAAADGTDFIIINAAAYTHTSVAIRDALAAVAIPFIEVHLSNLYKRDSFRQHSYLSDLAIGLITGLGADGYEAALRYAARH</sequence>